<keyword id="KW-0028">Amino-acid biosynthesis</keyword>
<keyword id="KW-0032">Aminotransferase</keyword>
<keyword id="KW-0368">Histidine biosynthesis</keyword>
<keyword id="KW-0663">Pyridoxal phosphate</keyword>
<keyword id="KW-0808">Transferase</keyword>
<name>HIS8_ECOLU</name>
<evidence type="ECO:0000255" key="1">
    <source>
        <dbReference type="HAMAP-Rule" id="MF_01023"/>
    </source>
</evidence>
<protein>
    <recommendedName>
        <fullName evidence="1">Histidinol-phosphate aminotransferase</fullName>
        <ecNumber evidence="1">2.6.1.9</ecNumber>
    </recommendedName>
    <alternativeName>
        <fullName evidence="1">Imidazole acetol-phosphate transaminase</fullName>
    </alternativeName>
</protein>
<feature type="chain" id="PRO_1000135396" description="Histidinol-phosphate aminotransferase">
    <location>
        <begin position="1"/>
        <end position="356"/>
    </location>
</feature>
<feature type="modified residue" description="N6-(pyridoxal phosphate)lysine" evidence="1">
    <location>
        <position position="214"/>
    </location>
</feature>
<gene>
    <name evidence="1" type="primary">hisC</name>
    <name type="ordered locus">ECUMN_2363</name>
</gene>
<accession>B7NC61</accession>
<comment type="catalytic activity">
    <reaction evidence="1">
        <text>L-histidinol phosphate + 2-oxoglutarate = 3-(imidazol-4-yl)-2-oxopropyl phosphate + L-glutamate</text>
        <dbReference type="Rhea" id="RHEA:23744"/>
        <dbReference type="ChEBI" id="CHEBI:16810"/>
        <dbReference type="ChEBI" id="CHEBI:29985"/>
        <dbReference type="ChEBI" id="CHEBI:57766"/>
        <dbReference type="ChEBI" id="CHEBI:57980"/>
        <dbReference type="EC" id="2.6.1.9"/>
    </reaction>
</comment>
<comment type="cofactor">
    <cofactor evidence="1">
        <name>pyridoxal 5'-phosphate</name>
        <dbReference type="ChEBI" id="CHEBI:597326"/>
    </cofactor>
</comment>
<comment type="pathway">
    <text evidence="1">Amino-acid biosynthesis; L-histidine biosynthesis; L-histidine from 5-phospho-alpha-D-ribose 1-diphosphate: step 7/9.</text>
</comment>
<comment type="subunit">
    <text evidence="1">Homodimer.</text>
</comment>
<comment type="similarity">
    <text evidence="1">Belongs to the class-II pyridoxal-phosphate-dependent aminotransferase family. Histidinol-phosphate aminotransferase subfamily.</text>
</comment>
<reference key="1">
    <citation type="journal article" date="2009" name="PLoS Genet.">
        <title>Organised genome dynamics in the Escherichia coli species results in highly diverse adaptive paths.</title>
        <authorList>
            <person name="Touchon M."/>
            <person name="Hoede C."/>
            <person name="Tenaillon O."/>
            <person name="Barbe V."/>
            <person name="Baeriswyl S."/>
            <person name="Bidet P."/>
            <person name="Bingen E."/>
            <person name="Bonacorsi S."/>
            <person name="Bouchier C."/>
            <person name="Bouvet O."/>
            <person name="Calteau A."/>
            <person name="Chiapello H."/>
            <person name="Clermont O."/>
            <person name="Cruveiller S."/>
            <person name="Danchin A."/>
            <person name="Diard M."/>
            <person name="Dossat C."/>
            <person name="Karoui M.E."/>
            <person name="Frapy E."/>
            <person name="Garry L."/>
            <person name="Ghigo J.M."/>
            <person name="Gilles A.M."/>
            <person name="Johnson J."/>
            <person name="Le Bouguenec C."/>
            <person name="Lescat M."/>
            <person name="Mangenot S."/>
            <person name="Martinez-Jehanne V."/>
            <person name="Matic I."/>
            <person name="Nassif X."/>
            <person name="Oztas S."/>
            <person name="Petit M.A."/>
            <person name="Pichon C."/>
            <person name="Rouy Z."/>
            <person name="Ruf C.S."/>
            <person name="Schneider D."/>
            <person name="Tourret J."/>
            <person name="Vacherie B."/>
            <person name="Vallenet D."/>
            <person name="Medigue C."/>
            <person name="Rocha E.P.C."/>
            <person name="Denamur E."/>
        </authorList>
    </citation>
    <scope>NUCLEOTIDE SEQUENCE [LARGE SCALE GENOMIC DNA]</scope>
    <source>
        <strain>UMN026 / ExPEC</strain>
    </source>
</reference>
<dbReference type="EC" id="2.6.1.9" evidence="1"/>
<dbReference type="EMBL" id="CU928163">
    <property type="protein sequence ID" value="CAR13551.1"/>
    <property type="molecule type" value="Genomic_DNA"/>
</dbReference>
<dbReference type="RefSeq" id="WP_000108979.1">
    <property type="nucleotide sequence ID" value="NC_011751.1"/>
</dbReference>
<dbReference type="RefSeq" id="YP_002413079.1">
    <property type="nucleotide sequence ID" value="NC_011751.1"/>
</dbReference>
<dbReference type="SMR" id="B7NC61"/>
<dbReference type="STRING" id="585056.ECUMN_2363"/>
<dbReference type="KEGG" id="eum:ECUMN_2363"/>
<dbReference type="PATRIC" id="fig|585056.7.peg.2544"/>
<dbReference type="HOGENOM" id="CLU_017584_3_1_6"/>
<dbReference type="UniPathway" id="UPA00031">
    <property type="reaction ID" value="UER00012"/>
</dbReference>
<dbReference type="Proteomes" id="UP000007097">
    <property type="component" value="Chromosome"/>
</dbReference>
<dbReference type="GO" id="GO:0004400">
    <property type="term" value="F:histidinol-phosphate transaminase activity"/>
    <property type="evidence" value="ECO:0007669"/>
    <property type="project" value="UniProtKB-UniRule"/>
</dbReference>
<dbReference type="GO" id="GO:0030170">
    <property type="term" value="F:pyridoxal phosphate binding"/>
    <property type="evidence" value="ECO:0007669"/>
    <property type="project" value="InterPro"/>
</dbReference>
<dbReference type="GO" id="GO:0000105">
    <property type="term" value="P:L-histidine biosynthetic process"/>
    <property type="evidence" value="ECO:0007669"/>
    <property type="project" value="UniProtKB-UniRule"/>
</dbReference>
<dbReference type="CDD" id="cd00609">
    <property type="entry name" value="AAT_like"/>
    <property type="match status" value="1"/>
</dbReference>
<dbReference type="FunFam" id="3.40.640.10:FF:000032">
    <property type="entry name" value="Histidinol-phosphate aminotransferase"/>
    <property type="match status" value="1"/>
</dbReference>
<dbReference type="FunFam" id="3.90.1150.10:FF:000042">
    <property type="entry name" value="Histidinol-phosphate aminotransferase"/>
    <property type="match status" value="1"/>
</dbReference>
<dbReference type="Gene3D" id="3.90.1150.10">
    <property type="entry name" value="Aspartate Aminotransferase, domain 1"/>
    <property type="match status" value="1"/>
</dbReference>
<dbReference type="Gene3D" id="3.40.640.10">
    <property type="entry name" value="Type I PLP-dependent aspartate aminotransferase-like (Major domain)"/>
    <property type="match status" value="1"/>
</dbReference>
<dbReference type="HAMAP" id="MF_01023">
    <property type="entry name" value="HisC_aminotrans_2"/>
    <property type="match status" value="1"/>
</dbReference>
<dbReference type="InterPro" id="IPR001917">
    <property type="entry name" value="Aminotrans_II_pyridoxalP_BS"/>
</dbReference>
<dbReference type="InterPro" id="IPR004839">
    <property type="entry name" value="Aminotransferase_I/II_large"/>
</dbReference>
<dbReference type="InterPro" id="IPR005861">
    <property type="entry name" value="HisP_aminotrans"/>
</dbReference>
<dbReference type="InterPro" id="IPR015424">
    <property type="entry name" value="PyrdxlP-dep_Trfase"/>
</dbReference>
<dbReference type="InterPro" id="IPR015421">
    <property type="entry name" value="PyrdxlP-dep_Trfase_major"/>
</dbReference>
<dbReference type="InterPro" id="IPR015422">
    <property type="entry name" value="PyrdxlP-dep_Trfase_small"/>
</dbReference>
<dbReference type="NCBIfam" id="TIGR01141">
    <property type="entry name" value="hisC"/>
    <property type="match status" value="1"/>
</dbReference>
<dbReference type="PANTHER" id="PTHR42885:SF2">
    <property type="entry name" value="HISTIDINOL-PHOSPHATE AMINOTRANSFERASE"/>
    <property type="match status" value="1"/>
</dbReference>
<dbReference type="PANTHER" id="PTHR42885">
    <property type="entry name" value="HISTIDINOL-PHOSPHATE AMINOTRANSFERASE-RELATED"/>
    <property type="match status" value="1"/>
</dbReference>
<dbReference type="Pfam" id="PF00155">
    <property type="entry name" value="Aminotran_1_2"/>
    <property type="match status" value="1"/>
</dbReference>
<dbReference type="SUPFAM" id="SSF53383">
    <property type="entry name" value="PLP-dependent transferases"/>
    <property type="match status" value="1"/>
</dbReference>
<dbReference type="PROSITE" id="PS00599">
    <property type="entry name" value="AA_TRANSFER_CLASS_2"/>
    <property type="match status" value="1"/>
</dbReference>
<proteinExistence type="inferred from homology"/>
<sequence length="356" mass="39452">MSTVTITDLARENVRNLTPYQSARRLGGNGDVWLNANEYPTAVEFQLTQQTLNRYPECQPKAVIENYAQYAGVKPEQVLVSRGADEGIELLIRAFCEPGKDAILYYPPTYGMYSVSAETIGVECRTVPTLDNWQLDLQGISDKLDGVKVVYVCSPNNPTGQLINPQDFRILLELTRGKAIVVADEAYIEFCPQASLAGWLTEYPHLAILRTLSKAFALAGLRCGFTLANEEVINLLMKVIAPYPLSTPVADIAAQALSPQGIVAMRERVAQIIAEREYLIAALKEISCVEQVFDSETNYILARFKASSAVFKSLWDQGIILRDQNKQPSLSGCLRITVGTREESQRVIDALRAEQV</sequence>
<organism>
    <name type="scientific">Escherichia coli O17:K52:H18 (strain UMN026 / ExPEC)</name>
    <dbReference type="NCBI Taxonomy" id="585056"/>
    <lineage>
        <taxon>Bacteria</taxon>
        <taxon>Pseudomonadati</taxon>
        <taxon>Pseudomonadota</taxon>
        <taxon>Gammaproteobacteria</taxon>
        <taxon>Enterobacterales</taxon>
        <taxon>Enterobacteriaceae</taxon>
        <taxon>Escherichia</taxon>
    </lineage>
</organism>